<comment type="function">
    <text evidence="1">Catalyzes the interconversion of methylthioribose-1-phosphate (MTR-1-P) into methylthioribulose-1-phosphate (MTRu-1-P).</text>
</comment>
<comment type="catalytic activity">
    <reaction evidence="1">
        <text>5-(methylsulfanyl)-alpha-D-ribose 1-phosphate = 5-(methylsulfanyl)-D-ribulose 1-phosphate</text>
        <dbReference type="Rhea" id="RHEA:19989"/>
        <dbReference type="ChEBI" id="CHEBI:58533"/>
        <dbReference type="ChEBI" id="CHEBI:58548"/>
        <dbReference type="EC" id="5.3.1.23"/>
    </reaction>
</comment>
<comment type="pathway">
    <text evidence="1">Amino-acid biosynthesis; L-methionine biosynthesis via salvage pathway; L-methionine from S-methyl-5-thio-alpha-D-ribose 1-phosphate: step 1/6.</text>
</comment>
<comment type="similarity">
    <text evidence="2">Belongs to the eIF-2B alpha/beta/delta subunits family. MtnA subfamily.</text>
</comment>
<proteinExistence type="inferred from homology"/>
<reference key="1">
    <citation type="journal article" date="2005" name="Nat. Biotechnol.">
        <title>Complete genome sequence of the acetic acid bacterium Gluconobacter oxydans.</title>
        <authorList>
            <person name="Prust C."/>
            <person name="Hoffmeister M."/>
            <person name="Liesegang H."/>
            <person name="Wiezer A."/>
            <person name="Fricke W.F."/>
            <person name="Ehrenreich A."/>
            <person name="Gottschalk G."/>
            <person name="Deppenmeier U."/>
        </authorList>
    </citation>
    <scope>NUCLEOTIDE SEQUENCE [LARGE SCALE GENOMIC DNA]</scope>
    <source>
        <strain>621H</strain>
    </source>
</reference>
<protein>
    <recommendedName>
        <fullName evidence="1">Methylthioribose-1-phosphate isomerase</fullName>
        <shortName evidence="1">M1Pi</shortName>
        <shortName evidence="1">MTR-1-P isomerase</shortName>
        <ecNumber evidence="1">5.3.1.23</ecNumber>
    </recommendedName>
    <alternativeName>
        <fullName evidence="1">S-methyl-5-thioribose-1-phosphate isomerase</fullName>
    </alternativeName>
</protein>
<gene>
    <name evidence="1" type="primary">mtnA</name>
    <name type="ordered locus">GOX1605</name>
</gene>
<sequence>MKINGISYRSLWRPSDDASSIRIFDQTRFPWNVEILELRDVGAVADAITSMQVRGAPLIGAVAAYGLVFALQDDASDEALEKAAAFLVATRPTAINLRWAIERMVARLKAVRPTERVAAGYVEADAICDEDVQVNEAIGRHGLELIREIWERKGKQGQVNLLTHCNAGWIATVDWGTALAPIYMAHDEGIPVHVWVDETRPRNQGSLLTAWELGSHGVPHTVIADNAGGHYMQTGRVDMVIVGTDRVTAQGDVANKIGTYLKALAAHDNNVPFWVALPSSTIDWRVRDGVKDIPIEERSADEVLFMTGLDSNGEAGRVRIAPLNSPAANPAFDVTPARLVTGLITERGRCDASEAGLQSLFPEQTKAH</sequence>
<evidence type="ECO:0000255" key="1">
    <source>
        <dbReference type="HAMAP-Rule" id="MF_01678"/>
    </source>
</evidence>
<evidence type="ECO:0000305" key="2"/>
<name>MTNA_GLUOX</name>
<keyword id="KW-0028">Amino-acid biosynthesis</keyword>
<keyword id="KW-0413">Isomerase</keyword>
<keyword id="KW-0486">Methionine biosynthesis</keyword>
<keyword id="KW-1185">Reference proteome</keyword>
<organism>
    <name type="scientific">Gluconobacter oxydans (strain 621H)</name>
    <name type="common">Gluconobacter suboxydans</name>
    <dbReference type="NCBI Taxonomy" id="290633"/>
    <lineage>
        <taxon>Bacteria</taxon>
        <taxon>Pseudomonadati</taxon>
        <taxon>Pseudomonadota</taxon>
        <taxon>Alphaproteobacteria</taxon>
        <taxon>Acetobacterales</taxon>
        <taxon>Acetobacteraceae</taxon>
        <taxon>Gluconobacter</taxon>
    </lineage>
</organism>
<accession>Q5FQK0</accession>
<feature type="chain" id="PRO_0000357192" description="Methylthioribose-1-phosphate isomerase">
    <location>
        <begin position="1"/>
        <end position="368"/>
    </location>
</feature>
<feature type="active site" description="Proton donor" evidence="1">
    <location>
        <position position="245"/>
    </location>
</feature>
<feature type="binding site" evidence="1">
    <location>
        <begin position="54"/>
        <end position="56"/>
    </location>
    <ligand>
        <name>substrate</name>
    </ligand>
</feature>
<feature type="binding site" evidence="1">
    <location>
        <position position="91"/>
    </location>
    <ligand>
        <name>substrate</name>
    </ligand>
</feature>
<feature type="binding site" evidence="1">
    <location>
        <position position="204"/>
    </location>
    <ligand>
        <name>substrate</name>
    </ligand>
</feature>
<feature type="binding site" evidence="1">
    <location>
        <begin position="255"/>
        <end position="256"/>
    </location>
    <ligand>
        <name>substrate</name>
    </ligand>
</feature>
<feature type="site" description="Transition state stabilizer" evidence="1">
    <location>
        <position position="165"/>
    </location>
</feature>
<dbReference type="EC" id="5.3.1.23" evidence="1"/>
<dbReference type="EMBL" id="CP000009">
    <property type="protein sequence ID" value="AAW61346.1"/>
    <property type="molecule type" value="Genomic_DNA"/>
</dbReference>
<dbReference type="RefSeq" id="WP_011253129.1">
    <property type="nucleotide sequence ID" value="NC_006677.1"/>
</dbReference>
<dbReference type="SMR" id="Q5FQK0"/>
<dbReference type="STRING" id="290633.GOX1605"/>
<dbReference type="KEGG" id="gox:GOX1605"/>
<dbReference type="eggNOG" id="COG0182">
    <property type="taxonomic scope" value="Bacteria"/>
</dbReference>
<dbReference type="HOGENOM" id="CLU_016218_1_2_5"/>
<dbReference type="UniPathway" id="UPA00904">
    <property type="reaction ID" value="UER00874"/>
</dbReference>
<dbReference type="Proteomes" id="UP000006375">
    <property type="component" value="Chromosome"/>
</dbReference>
<dbReference type="GO" id="GO:0046523">
    <property type="term" value="F:S-methyl-5-thioribose-1-phosphate isomerase activity"/>
    <property type="evidence" value="ECO:0007669"/>
    <property type="project" value="UniProtKB-UniRule"/>
</dbReference>
<dbReference type="GO" id="GO:0019509">
    <property type="term" value="P:L-methionine salvage from methylthioadenosine"/>
    <property type="evidence" value="ECO:0007669"/>
    <property type="project" value="UniProtKB-UniRule"/>
</dbReference>
<dbReference type="FunFam" id="3.40.50.10470:FF:000006">
    <property type="entry name" value="Methylthioribose-1-phosphate isomerase"/>
    <property type="match status" value="1"/>
</dbReference>
<dbReference type="Gene3D" id="1.20.120.420">
    <property type="entry name" value="translation initiation factor eif-2b, domain 1"/>
    <property type="match status" value="1"/>
</dbReference>
<dbReference type="Gene3D" id="3.40.50.10470">
    <property type="entry name" value="Translation initiation factor eif-2b, domain 2"/>
    <property type="match status" value="1"/>
</dbReference>
<dbReference type="HAMAP" id="MF_01678">
    <property type="entry name" value="Salvage_MtnA"/>
    <property type="match status" value="1"/>
</dbReference>
<dbReference type="InterPro" id="IPR000649">
    <property type="entry name" value="IF-2B-related"/>
</dbReference>
<dbReference type="InterPro" id="IPR005251">
    <property type="entry name" value="IF-M1Pi"/>
</dbReference>
<dbReference type="InterPro" id="IPR042529">
    <property type="entry name" value="IF_2B-like_C"/>
</dbReference>
<dbReference type="InterPro" id="IPR011559">
    <property type="entry name" value="Initiation_fac_2B_a/b/d"/>
</dbReference>
<dbReference type="InterPro" id="IPR027363">
    <property type="entry name" value="M1Pi_N"/>
</dbReference>
<dbReference type="InterPro" id="IPR037171">
    <property type="entry name" value="NagB/RpiA_transferase-like"/>
</dbReference>
<dbReference type="NCBIfam" id="TIGR00524">
    <property type="entry name" value="eIF-2B_rel"/>
    <property type="match status" value="1"/>
</dbReference>
<dbReference type="NCBIfam" id="NF004326">
    <property type="entry name" value="PRK05720.1"/>
    <property type="match status" value="1"/>
</dbReference>
<dbReference type="NCBIfam" id="TIGR00512">
    <property type="entry name" value="salvage_mtnA"/>
    <property type="match status" value="1"/>
</dbReference>
<dbReference type="PANTHER" id="PTHR43475">
    <property type="entry name" value="METHYLTHIORIBOSE-1-PHOSPHATE ISOMERASE"/>
    <property type="match status" value="1"/>
</dbReference>
<dbReference type="PANTHER" id="PTHR43475:SF1">
    <property type="entry name" value="METHYLTHIORIBOSE-1-PHOSPHATE ISOMERASE"/>
    <property type="match status" value="1"/>
</dbReference>
<dbReference type="Pfam" id="PF01008">
    <property type="entry name" value="IF-2B"/>
    <property type="match status" value="1"/>
</dbReference>
<dbReference type="SUPFAM" id="SSF100950">
    <property type="entry name" value="NagB/RpiA/CoA transferase-like"/>
    <property type="match status" value="1"/>
</dbReference>